<accession>A7MEG5</accession>
<gene>
    <name evidence="1" type="primary">rplS</name>
    <name type="ordered locus">ESA_00649</name>
</gene>
<protein>
    <recommendedName>
        <fullName evidence="1">Large ribosomal subunit protein bL19</fullName>
    </recommendedName>
    <alternativeName>
        <fullName evidence="2">50S ribosomal protein L19</fullName>
    </alternativeName>
</protein>
<dbReference type="EMBL" id="CP000783">
    <property type="protein sequence ID" value="ABU75932.1"/>
    <property type="molecule type" value="Genomic_DNA"/>
</dbReference>
<dbReference type="RefSeq" id="WP_002914145.1">
    <property type="nucleotide sequence ID" value="NC_009778.1"/>
</dbReference>
<dbReference type="SMR" id="A7MEG5"/>
<dbReference type="GeneID" id="97446661"/>
<dbReference type="KEGG" id="esa:ESA_00649"/>
<dbReference type="HOGENOM" id="CLU_103507_2_1_6"/>
<dbReference type="Proteomes" id="UP000000260">
    <property type="component" value="Chromosome"/>
</dbReference>
<dbReference type="GO" id="GO:0022625">
    <property type="term" value="C:cytosolic large ribosomal subunit"/>
    <property type="evidence" value="ECO:0007669"/>
    <property type="project" value="TreeGrafter"/>
</dbReference>
<dbReference type="GO" id="GO:0003735">
    <property type="term" value="F:structural constituent of ribosome"/>
    <property type="evidence" value="ECO:0007669"/>
    <property type="project" value="InterPro"/>
</dbReference>
<dbReference type="GO" id="GO:0006412">
    <property type="term" value="P:translation"/>
    <property type="evidence" value="ECO:0007669"/>
    <property type="project" value="UniProtKB-UniRule"/>
</dbReference>
<dbReference type="FunFam" id="2.30.30.790:FF:000001">
    <property type="entry name" value="50S ribosomal protein L19"/>
    <property type="match status" value="1"/>
</dbReference>
<dbReference type="Gene3D" id="2.30.30.790">
    <property type="match status" value="1"/>
</dbReference>
<dbReference type="HAMAP" id="MF_00402">
    <property type="entry name" value="Ribosomal_bL19"/>
    <property type="match status" value="1"/>
</dbReference>
<dbReference type="InterPro" id="IPR001857">
    <property type="entry name" value="Ribosomal_bL19"/>
</dbReference>
<dbReference type="InterPro" id="IPR018257">
    <property type="entry name" value="Ribosomal_bL19_CS"/>
</dbReference>
<dbReference type="InterPro" id="IPR038657">
    <property type="entry name" value="Ribosomal_bL19_sf"/>
</dbReference>
<dbReference type="InterPro" id="IPR008991">
    <property type="entry name" value="Translation_prot_SH3-like_sf"/>
</dbReference>
<dbReference type="NCBIfam" id="TIGR01024">
    <property type="entry name" value="rplS_bact"/>
    <property type="match status" value="1"/>
</dbReference>
<dbReference type="PANTHER" id="PTHR15680:SF9">
    <property type="entry name" value="LARGE RIBOSOMAL SUBUNIT PROTEIN BL19M"/>
    <property type="match status" value="1"/>
</dbReference>
<dbReference type="PANTHER" id="PTHR15680">
    <property type="entry name" value="RIBOSOMAL PROTEIN L19"/>
    <property type="match status" value="1"/>
</dbReference>
<dbReference type="Pfam" id="PF01245">
    <property type="entry name" value="Ribosomal_L19"/>
    <property type="match status" value="1"/>
</dbReference>
<dbReference type="PIRSF" id="PIRSF002191">
    <property type="entry name" value="Ribosomal_L19"/>
    <property type="match status" value="1"/>
</dbReference>
<dbReference type="PRINTS" id="PR00061">
    <property type="entry name" value="RIBOSOMALL19"/>
</dbReference>
<dbReference type="SUPFAM" id="SSF50104">
    <property type="entry name" value="Translation proteins SH3-like domain"/>
    <property type="match status" value="1"/>
</dbReference>
<dbReference type="PROSITE" id="PS01015">
    <property type="entry name" value="RIBOSOMAL_L19"/>
    <property type="match status" value="1"/>
</dbReference>
<feature type="chain" id="PRO_1000049672" description="Large ribosomal subunit protein bL19">
    <location>
        <begin position="1"/>
        <end position="115"/>
    </location>
</feature>
<proteinExistence type="inferred from homology"/>
<name>RL19_CROS8</name>
<comment type="function">
    <text evidence="1">This protein is located at the 30S-50S ribosomal subunit interface and may play a role in the structure and function of the aminoacyl-tRNA binding site.</text>
</comment>
<comment type="similarity">
    <text evidence="1">Belongs to the bacterial ribosomal protein bL19 family.</text>
</comment>
<reference key="1">
    <citation type="journal article" date="2010" name="PLoS ONE">
        <title>Genome sequence of Cronobacter sakazakii BAA-894 and comparative genomic hybridization analysis with other Cronobacter species.</title>
        <authorList>
            <person name="Kucerova E."/>
            <person name="Clifton S.W."/>
            <person name="Xia X.Q."/>
            <person name="Long F."/>
            <person name="Porwollik S."/>
            <person name="Fulton L."/>
            <person name="Fronick C."/>
            <person name="Minx P."/>
            <person name="Kyung K."/>
            <person name="Warren W."/>
            <person name="Fulton R."/>
            <person name="Feng D."/>
            <person name="Wollam A."/>
            <person name="Shah N."/>
            <person name="Bhonagiri V."/>
            <person name="Nash W.E."/>
            <person name="Hallsworth-Pepin K."/>
            <person name="Wilson R.K."/>
            <person name="McClelland M."/>
            <person name="Forsythe S.J."/>
        </authorList>
    </citation>
    <scope>NUCLEOTIDE SEQUENCE [LARGE SCALE GENOMIC DNA]</scope>
    <source>
        <strain>ATCC BAA-894</strain>
    </source>
</reference>
<keyword id="KW-1185">Reference proteome</keyword>
<keyword id="KW-0687">Ribonucleoprotein</keyword>
<keyword id="KW-0689">Ribosomal protein</keyword>
<sequence>MSNIIKQLEQEQMKQDVPSFRPGDTVEVKVWVVEGSKKRLQAFEGVVIAIRNRGLHSAFTVRKISNGEGVERVFQTHSPVVDSIAVKRRGAVRKAKLYYLRERTGKSARIKERLN</sequence>
<organism>
    <name type="scientific">Cronobacter sakazakii (strain ATCC BAA-894)</name>
    <name type="common">Enterobacter sakazakii</name>
    <dbReference type="NCBI Taxonomy" id="290339"/>
    <lineage>
        <taxon>Bacteria</taxon>
        <taxon>Pseudomonadati</taxon>
        <taxon>Pseudomonadota</taxon>
        <taxon>Gammaproteobacteria</taxon>
        <taxon>Enterobacterales</taxon>
        <taxon>Enterobacteriaceae</taxon>
        <taxon>Cronobacter</taxon>
    </lineage>
</organism>
<evidence type="ECO:0000255" key="1">
    <source>
        <dbReference type="HAMAP-Rule" id="MF_00402"/>
    </source>
</evidence>
<evidence type="ECO:0000305" key="2"/>